<name>Y4753_PSEAE</name>
<organism>
    <name type="scientific">Pseudomonas aeruginosa (strain ATCC 15692 / DSM 22644 / CIP 104116 / JCM 14847 / LMG 12228 / 1C / PRS 101 / PAO1)</name>
    <dbReference type="NCBI Taxonomy" id="208964"/>
    <lineage>
        <taxon>Bacteria</taxon>
        <taxon>Pseudomonadati</taxon>
        <taxon>Pseudomonadota</taxon>
        <taxon>Gammaproteobacteria</taxon>
        <taxon>Pseudomonadales</taxon>
        <taxon>Pseudomonadaceae</taxon>
        <taxon>Pseudomonas</taxon>
    </lineage>
</organism>
<reference key="1">
    <citation type="journal article" date="1997" name="J. Bacteriol.">
        <title>Identification of greA encoding a transcriptional elongation factor as a member of the carA-orf-carB-greA operon in Pseudomonas aeruginosa PAO1.</title>
        <authorList>
            <person name="Lu C.-D."/>
            <person name="Kwon D.-H."/>
            <person name="Abdelal A.T."/>
        </authorList>
    </citation>
    <scope>NUCLEOTIDE SEQUENCE [GENOMIC DNA]</scope>
    <source>
        <strain>ATCC 15692 / DSM 22644 / CIP 104116 / JCM 14847 / LMG 12228 / 1C / PRS 101 / PAO1</strain>
    </source>
</reference>
<reference key="2">
    <citation type="journal article" date="2000" name="Nature">
        <title>Complete genome sequence of Pseudomonas aeruginosa PAO1, an opportunistic pathogen.</title>
        <authorList>
            <person name="Stover C.K."/>
            <person name="Pham X.-Q.T."/>
            <person name="Erwin A.L."/>
            <person name="Mizoguchi S.D."/>
            <person name="Warrener P."/>
            <person name="Hickey M.J."/>
            <person name="Brinkman F.S.L."/>
            <person name="Hufnagle W.O."/>
            <person name="Kowalik D.J."/>
            <person name="Lagrou M."/>
            <person name="Garber R.L."/>
            <person name="Goltry L."/>
            <person name="Tolentino E."/>
            <person name="Westbrock-Wadman S."/>
            <person name="Yuan Y."/>
            <person name="Brody L.L."/>
            <person name="Coulter S.N."/>
            <person name="Folger K.R."/>
            <person name="Kas A."/>
            <person name="Larbig K."/>
            <person name="Lim R.M."/>
            <person name="Smith K.A."/>
            <person name="Spencer D.H."/>
            <person name="Wong G.K.-S."/>
            <person name="Wu Z."/>
            <person name="Paulsen I.T."/>
            <person name="Reizer J."/>
            <person name="Saier M.H. Jr."/>
            <person name="Hancock R.E.W."/>
            <person name="Lory S."/>
            <person name="Olson M.V."/>
        </authorList>
    </citation>
    <scope>NUCLEOTIDE SEQUENCE [LARGE SCALE GENOMIC DNA]</scope>
    <source>
        <strain>ATCC 15692 / DSM 22644 / CIP 104116 / JCM 14847 / LMG 12228 / 1C / PRS 101 / PAO1</strain>
    </source>
</reference>
<keyword id="KW-1185">Reference proteome</keyword>
<keyword id="KW-0694">RNA-binding</keyword>
<protein>
    <recommendedName>
        <fullName>Probable RNA-binding protein PA4753</fullName>
    </recommendedName>
</protein>
<accession>P95453</accession>
<proteinExistence type="predicted"/>
<evidence type="ECO:0000255" key="1">
    <source>
        <dbReference type="PROSITE-ProRule" id="PRU00626"/>
    </source>
</evidence>
<sequence>MALTQEQKKQFKSIGHHLKPVLIVAENGLTEGVLAELERALNDHELIKVKLALAERDDRRALLDELCAQSRSDLVQSIGKMALVYRKNPKPNKNLSNISRFAGI</sequence>
<feature type="chain" id="PRO_0000202168" description="Probable RNA-binding protein PA4753">
    <location>
        <begin position="1"/>
        <end position="104"/>
    </location>
</feature>
<feature type="domain" description="CRM" evidence="1">
    <location>
        <begin position="1"/>
        <end position="97"/>
    </location>
</feature>
<gene>
    <name type="ordered locus">PA4753</name>
</gene>
<dbReference type="EMBL" id="U81259">
    <property type="protein sequence ID" value="AAB39253.1"/>
    <property type="molecule type" value="Genomic_DNA"/>
</dbReference>
<dbReference type="EMBL" id="AE004091">
    <property type="protein sequence ID" value="AAG08139.1"/>
    <property type="molecule type" value="Genomic_DNA"/>
</dbReference>
<dbReference type="PIR" id="B83051">
    <property type="entry name" value="B83051"/>
</dbReference>
<dbReference type="RefSeq" id="NP_253441.1">
    <property type="nucleotide sequence ID" value="NC_002516.2"/>
</dbReference>
<dbReference type="SMR" id="P95453"/>
<dbReference type="FunCoup" id="P95453">
    <property type="interactions" value="320"/>
</dbReference>
<dbReference type="STRING" id="208964.PA4753"/>
<dbReference type="PaxDb" id="208964-PA4753"/>
<dbReference type="DNASU" id="881726"/>
<dbReference type="GeneID" id="881726"/>
<dbReference type="KEGG" id="pae:PA4753"/>
<dbReference type="PATRIC" id="fig|208964.12.peg.4979"/>
<dbReference type="PseudoCAP" id="PA4753"/>
<dbReference type="HOGENOM" id="CLU_095994_2_1_6"/>
<dbReference type="InParanoid" id="P95453"/>
<dbReference type="OrthoDB" id="9797519at2"/>
<dbReference type="PhylomeDB" id="P95453"/>
<dbReference type="BioCyc" id="PAER208964:G1FZ6-4865-MONOMER"/>
<dbReference type="Proteomes" id="UP000002438">
    <property type="component" value="Chromosome"/>
</dbReference>
<dbReference type="GO" id="GO:0003723">
    <property type="term" value="F:RNA binding"/>
    <property type="evidence" value="ECO:0007669"/>
    <property type="project" value="UniProtKB-KW"/>
</dbReference>
<dbReference type="Gene3D" id="3.30.110.60">
    <property type="entry name" value="YhbY-like"/>
    <property type="match status" value="1"/>
</dbReference>
<dbReference type="InterPro" id="IPR001890">
    <property type="entry name" value="RNA-binding_CRM"/>
</dbReference>
<dbReference type="InterPro" id="IPR051925">
    <property type="entry name" value="RNA-binding_domain"/>
</dbReference>
<dbReference type="InterPro" id="IPR017924">
    <property type="entry name" value="RNA-binding_YhbY"/>
</dbReference>
<dbReference type="InterPro" id="IPR035920">
    <property type="entry name" value="YhbY-like_sf"/>
</dbReference>
<dbReference type="NCBIfam" id="TIGR00253">
    <property type="entry name" value="RNA_bind_YhbY"/>
    <property type="match status" value="1"/>
</dbReference>
<dbReference type="PANTHER" id="PTHR40065">
    <property type="entry name" value="RNA-BINDING PROTEIN YHBY"/>
    <property type="match status" value="1"/>
</dbReference>
<dbReference type="PANTHER" id="PTHR40065:SF3">
    <property type="entry name" value="RNA-BINDING PROTEIN YHBY"/>
    <property type="match status" value="1"/>
</dbReference>
<dbReference type="Pfam" id="PF01985">
    <property type="entry name" value="CRS1_YhbY"/>
    <property type="match status" value="1"/>
</dbReference>
<dbReference type="SMART" id="SM01103">
    <property type="entry name" value="CRS1_YhbY"/>
    <property type="match status" value="1"/>
</dbReference>
<dbReference type="SUPFAM" id="SSF75471">
    <property type="entry name" value="YhbY-like"/>
    <property type="match status" value="1"/>
</dbReference>
<dbReference type="PROSITE" id="PS51295">
    <property type="entry name" value="CRM"/>
    <property type="match status" value="1"/>
</dbReference>